<feature type="chain" id="PRO_0000060100" description="D-methionine transport system permease protein MetI">
    <location>
        <begin position="1"/>
        <end position="217"/>
    </location>
</feature>
<feature type="topological domain" description="Periplasmic" evidence="2">
    <location>
        <begin position="1"/>
        <end position="19"/>
    </location>
</feature>
<feature type="transmembrane region" description="Helical" evidence="3">
    <location>
        <begin position="20"/>
        <end position="40"/>
    </location>
</feature>
<feature type="topological domain" description="Cytoplasmic" evidence="2">
    <location>
        <begin position="41"/>
        <end position="67"/>
    </location>
</feature>
<feature type="transmembrane region" description="Helical" evidence="3">
    <location>
        <begin position="68"/>
        <end position="88"/>
    </location>
</feature>
<feature type="topological domain" description="Periplasmic" evidence="2">
    <location>
        <begin position="89"/>
        <end position="92"/>
    </location>
</feature>
<feature type="transmembrane region" description="Helical" evidence="3">
    <location>
        <begin position="93"/>
        <end position="113"/>
    </location>
</feature>
<feature type="topological domain" description="Cytoplasmic" evidence="2">
    <location>
        <begin position="114"/>
        <end position="151"/>
    </location>
</feature>
<feature type="transmembrane region" description="Helical" evidence="3">
    <location>
        <begin position="152"/>
        <end position="172"/>
    </location>
</feature>
<feature type="topological domain" description="Periplasmic" evidence="2">
    <location>
        <begin position="173"/>
        <end position="185"/>
    </location>
</feature>
<feature type="transmembrane region" description="Helical" evidence="3">
    <location>
        <begin position="186"/>
        <end position="206"/>
    </location>
</feature>
<feature type="topological domain" description="Cytoplasmic" evidence="2">
    <location>
        <begin position="207"/>
        <end position="217"/>
    </location>
</feature>
<feature type="domain" description="ABC transmembrane type-1" evidence="3">
    <location>
        <begin position="13"/>
        <end position="204"/>
    </location>
</feature>
<evidence type="ECO:0000250" key="1"/>
<evidence type="ECO:0000255" key="2"/>
<evidence type="ECO:0000255" key="3">
    <source>
        <dbReference type="PROSITE-ProRule" id="PRU00441"/>
    </source>
</evidence>
<evidence type="ECO:0000305" key="4"/>
<name>METI_SALTI</name>
<sequence length="217" mass="23231">MSEAMMWLLVRGVWETLAMTFVSGFFGFVIGLPVGVLLYVTRPGQIMENARLYRSLSAVVNIFRSIPFIILLVWMIPFTRIIVGTSIGLQAAIVPLTVGAAPFIARIVENALLEIPAGLIEASRAMGATPLQIVRKILLPEALPGLVNAATITLITLVGYSAMGGAVGAGGLGQIGYQYGYIGYNATVMNTVLVLLVVLVYLIQLSGDRIVRAVTHK</sequence>
<gene>
    <name type="primary">metI</name>
    <name type="ordered locus">STY0273</name>
    <name type="ordered locus">t0249</name>
</gene>
<organism>
    <name type="scientific">Salmonella typhi</name>
    <dbReference type="NCBI Taxonomy" id="90370"/>
    <lineage>
        <taxon>Bacteria</taxon>
        <taxon>Pseudomonadati</taxon>
        <taxon>Pseudomonadota</taxon>
        <taxon>Gammaproteobacteria</taxon>
        <taxon>Enterobacterales</taxon>
        <taxon>Enterobacteriaceae</taxon>
        <taxon>Salmonella</taxon>
    </lineage>
</organism>
<protein>
    <recommendedName>
        <fullName>D-methionine transport system permease protein MetI</fullName>
    </recommendedName>
</protein>
<proteinExistence type="inferred from homology"/>
<accession>Q8Z991</accession>
<keyword id="KW-0029">Amino-acid transport</keyword>
<keyword id="KW-0997">Cell inner membrane</keyword>
<keyword id="KW-1003">Cell membrane</keyword>
<keyword id="KW-0472">Membrane</keyword>
<keyword id="KW-0812">Transmembrane</keyword>
<keyword id="KW-1133">Transmembrane helix</keyword>
<keyword id="KW-0813">Transport</keyword>
<dbReference type="EMBL" id="AL513382">
    <property type="protein sequence ID" value="CAD08706.1"/>
    <property type="status" value="ALT_INIT"/>
    <property type="molecule type" value="Genomic_DNA"/>
</dbReference>
<dbReference type="EMBL" id="AE014613">
    <property type="protein sequence ID" value="AAO67978.1"/>
    <property type="status" value="ALT_INIT"/>
    <property type="molecule type" value="Genomic_DNA"/>
</dbReference>
<dbReference type="PIR" id="AB0533">
    <property type="entry name" value="AB0533"/>
</dbReference>
<dbReference type="RefSeq" id="NP_454855.1">
    <property type="nucleotide sequence ID" value="NC_003198.1"/>
</dbReference>
<dbReference type="RefSeq" id="WP_001287483.1">
    <property type="nucleotide sequence ID" value="NZ_WSUR01000065.1"/>
</dbReference>
<dbReference type="SMR" id="Q8Z991"/>
<dbReference type="STRING" id="220341.gene:17584304"/>
<dbReference type="KEGG" id="stt:t0249"/>
<dbReference type="KEGG" id="sty:STY0273"/>
<dbReference type="PATRIC" id="fig|220341.7.peg.274"/>
<dbReference type="eggNOG" id="COG2011">
    <property type="taxonomic scope" value="Bacteria"/>
</dbReference>
<dbReference type="HOGENOM" id="CLU_077375_0_1_6"/>
<dbReference type="OMA" id="TFWSAIF"/>
<dbReference type="OrthoDB" id="9793490at2"/>
<dbReference type="Proteomes" id="UP000000541">
    <property type="component" value="Chromosome"/>
</dbReference>
<dbReference type="Proteomes" id="UP000002670">
    <property type="component" value="Chromosome"/>
</dbReference>
<dbReference type="GO" id="GO:0005886">
    <property type="term" value="C:plasma membrane"/>
    <property type="evidence" value="ECO:0007669"/>
    <property type="project" value="UniProtKB-SubCell"/>
</dbReference>
<dbReference type="GO" id="GO:0048473">
    <property type="term" value="P:D-methionine transmembrane transport"/>
    <property type="evidence" value="ECO:0007669"/>
    <property type="project" value="TreeGrafter"/>
</dbReference>
<dbReference type="CDD" id="cd06261">
    <property type="entry name" value="TM_PBP2"/>
    <property type="match status" value="1"/>
</dbReference>
<dbReference type="FunFam" id="1.10.3720.10:FF:000002">
    <property type="entry name" value="D-methionine ABC transporter permease MetI"/>
    <property type="match status" value="1"/>
</dbReference>
<dbReference type="Gene3D" id="1.10.3720.10">
    <property type="entry name" value="MetI-like"/>
    <property type="match status" value="1"/>
</dbReference>
<dbReference type="InterPro" id="IPR051322">
    <property type="entry name" value="AA_ABC_Transporter_Permease"/>
</dbReference>
<dbReference type="InterPro" id="IPR000515">
    <property type="entry name" value="MetI-like"/>
</dbReference>
<dbReference type="InterPro" id="IPR035906">
    <property type="entry name" value="MetI-like_sf"/>
</dbReference>
<dbReference type="NCBIfam" id="NF008049">
    <property type="entry name" value="PRK10782.1"/>
    <property type="match status" value="1"/>
</dbReference>
<dbReference type="PANTHER" id="PTHR30450">
    <property type="entry name" value="ABC TRANSPORTER PERMEASE"/>
    <property type="match status" value="1"/>
</dbReference>
<dbReference type="PANTHER" id="PTHR30450:SF8">
    <property type="entry name" value="D-METHIONINE TRANSPORT SYSTEM PERMEASE PROTEIN METI"/>
    <property type="match status" value="1"/>
</dbReference>
<dbReference type="Pfam" id="PF00528">
    <property type="entry name" value="BPD_transp_1"/>
    <property type="match status" value="1"/>
</dbReference>
<dbReference type="SUPFAM" id="SSF161098">
    <property type="entry name" value="MetI-like"/>
    <property type="match status" value="1"/>
</dbReference>
<dbReference type="PROSITE" id="PS50928">
    <property type="entry name" value="ABC_TM1"/>
    <property type="match status" value="1"/>
</dbReference>
<reference key="1">
    <citation type="journal article" date="2001" name="Nature">
        <title>Complete genome sequence of a multiple drug resistant Salmonella enterica serovar Typhi CT18.</title>
        <authorList>
            <person name="Parkhill J."/>
            <person name="Dougan G."/>
            <person name="James K.D."/>
            <person name="Thomson N.R."/>
            <person name="Pickard D."/>
            <person name="Wain J."/>
            <person name="Churcher C.M."/>
            <person name="Mungall K.L."/>
            <person name="Bentley S.D."/>
            <person name="Holden M.T.G."/>
            <person name="Sebaihia M."/>
            <person name="Baker S."/>
            <person name="Basham D."/>
            <person name="Brooks K."/>
            <person name="Chillingworth T."/>
            <person name="Connerton P."/>
            <person name="Cronin A."/>
            <person name="Davis P."/>
            <person name="Davies R.M."/>
            <person name="Dowd L."/>
            <person name="White N."/>
            <person name="Farrar J."/>
            <person name="Feltwell T."/>
            <person name="Hamlin N."/>
            <person name="Haque A."/>
            <person name="Hien T.T."/>
            <person name="Holroyd S."/>
            <person name="Jagels K."/>
            <person name="Krogh A."/>
            <person name="Larsen T.S."/>
            <person name="Leather S."/>
            <person name="Moule S."/>
            <person name="O'Gaora P."/>
            <person name="Parry C."/>
            <person name="Quail M.A."/>
            <person name="Rutherford K.M."/>
            <person name="Simmonds M."/>
            <person name="Skelton J."/>
            <person name="Stevens K."/>
            <person name="Whitehead S."/>
            <person name="Barrell B.G."/>
        </authorList>
    </citation>
    <scope>NUCLEOTIDE SEQUENCE [LARGE SCALE GENOMIC DNA]</scope>
    <source>
        <strain>CT18</strain>
    </source>
</reference>
<reference key="2">
    <citation type="journal article" date="2003" name="J. Bacteriol.">
        <title>Comparative genomics of Salmonella enterica serovar Typhi strains Ty2 and CT18.</title>
        <authorList>
            <person name="Deng W."/>
            <person name="Liou S.-R."/>
            <person name="Plunkett G. III"/>
            <person name="Mayhew G.F."/>
            <person name="Rose D.J."/>
            <person name="Burland V."/>
            <person name="Kodoyianni V."/>
            <person name="Schwartz D.C."/>
            <person name="Blattner F.R."/>
        </authorList>
    </citation>
    <scope>NUCLEOTIDE SEQUENCE [LARGE SCALE GENOMIC DNA]</scope>
    <source>
        <strain>ATCC 700931 / Ty2</strain>
    </source>
</reference>
<comment type="function">
    <text evidence="1">Part of the binding-protein-dependent transport system for D-methionine and the toxic methionine analog alpha-methyl-methionine. Probably responsible for the translocation of the substrate across the membrane (By similarity).</text>
</comment>
<comment type="subcellular location">
    <subcellularLocation>
        <location evidence="1">Cell inner membrane</location>
        <topology evidence="3">Multi-pass membrane protein</topology>
    </subcellularLocation>
</comment>
<comment type="similarity">
    <text evidence="4">Belongs to the binding-protein-dependent transport system permease family. CysTW subfamily.</text>
</comment>
<comment type="sequence caution" evidence="4">
    <conflict type="erroneous initiation">
        <sequence resource="EMBL-CDS" id="AAO67978"/>
    </conflict>
</comment>
<comment type="sequence caution" evidence="4">
    <conflict type="erroneous initiation">
        <sequence resource="EMBL-CDS" id="CAD08706"/>
    </conflict>
</comment>